<gene>
    <name evidence="1" type="primary">katG1</name>
    <name type="synonym">katGI</name>
</gene>
<name>KATG1_MYCFO</name>
<dbReference type="EC" id="1.11.1.21" evidence="1"/>
<dbReference type="EMBL" id="Y07865">
    <property type="protein sequence ID" value="CAA69192.1"/>
    <property type="molecule type" value="Genomic_DNA"/>
</dbReference>
<dbReference type="SMR" id="O08404"/>
<dbReference type="STRING" id="1766.XA26_32250"/>
<dbReference type="PeroxiBase" id="2396">
    <property type="entry name" value="MfoCP01"/>
</dbReference>
<dbReference type="GO" id="GO:0005829">
    <property type="term" value="C:cytosol"/>
    <property type="evidence" value="ECO:0007669"/>
    <property type="project" value="TreeGrafter"/>
</dbReference>
<dbReference type="GO" id="GO:0004096">
    <property type="term" value="F:catalase activity"/>
    <property type="evidence" value="ECO:0007669"/>
    <property type="project" value="UniProtKB-UniRule"/>
</dbReference>
<dbReference type="GO" id="GO:0020037">
    <property type="term" value="F:heme binding"/>
    <property type="evidence" value="ECO:0007669"/>
    <property type="project" value="InterPro"/>
</dbReference>
<dbReference type="GO" id="GO:0046872">
    <property type="term" value="F:metal ion binding"/>
    <property type="evidence" value="ECO:0007669"/>
    <property type="project" value="UniProtKB-KW"/>
</dbReference>
<dbReference type="GO" id="GO:0070301">
    <property type="term" value="P:cellular response to hydrogen peroxide"/>
    <property type="evidence" value="ECO:0007669"/>
    <property type="project" value="TreeGrafter"/>
</dbReference>
<dbReference type="GO" id="GO:0042744">
    <property type="term" value="P:hydrogen peroxide catabolic process"/>
    <property type="evidence" value="ECO:0007669"/>
    <property type="project" value="UniProtKB-KW"/>
</dbReference>
<dbReference type="CDD" id="cd08200">
    <property type="entry name" value="catalase_peroxidase_2"/>
    <property type="match status" value="1"/>
</dbReference>
<dbReference type="FunFam" id="1.10.420.10:FF:000002">
    <property type="entry name" value="Catalase-peroxidase"/>
    <property type="match status" value="1"/>
</dbReference>
<dbReference type="FunFam" id="1.10.420.10:FF:000004">
    <property type="entry name" value="Catalase-peroxidase"/>
    <property type="match status" value="1"/>
</dbReference>
<dbReference type="FunFam" id="1.10.520.10:FF:000002">
    <property type="entry name" value="Catalase-peroxidase"/>
    <property type="match status" value="1"/>
</dbReference>
<dbReference type="Gene3D" id="1.10.520.10">
    <property type="match status" value="2"/>
</dbReference>
<dbReference type="Gene3D" id="1.10.420.10">
    <property type="entry name" value="Peroxidase, domain 2"/>
    <property type="match status" value="2"/>
</dbReference>
<dbReference type="HAMAP" id="MF_01961">
    <property type="entry name" value="Catal_peroxid"/>
    <property type="match status" value="1"/>
</dbReference>
<dbReference type="InterPro" id="IPR000763">
    <property type="entry name" value="Catalase_peroxidase"/>
</dbReference>
<dbReference type="InterPro" id="IPR002016">
    <property type="entry name" value="Haem_peroxidase"/>
</dbReference>
<dbReference type="InterPro" id="IPR010255">
    <property type="entry name" value="Haem_peroxidase_sf"/>
</dbReference>
<dbReference type="InterPro" id="IPR019794">
    <property type="entry name" value="Peroxidases_AS"/>
</dbReference>
<dbReference type="InterPro" id="IPR019793">
    <property type="entry name" value="Peroxidases_heam-ligand_BS"/>
</dbReference>
<dbReference type="NCBIfam" id="TIGR00198">
    <property type="entry name" value="cat_per_HPI"/>
    <property type="match status" value="1"/>
</dbReference>
<dbReference type="NCBIfam" id="NF011635">
    <property type="entry name" value="PRK15061.1"/>
    <property type="match status" value="1"/>
</dbReference>
<dbReference type="PANTHER" id="PTHR30555:SF0">
    <property type="entry name" value="CATALASE-PEROXIDASE"/>
    <property type="match status" value="1"/>
</dbReference>
<dbReference type="PANTHER" id="PTHR30555">
    <property type="entry name" value="HYDROPEROXIDASE I, BIFUNCTIONAL CATALASE-PEROXIDASE"/>
    <property type="match status" value="1"/>
</dbReference>
<dbReference type="Pfam" id="PF00141">
    <property type="entry name" value="peroxidase"/>
    <property type="match status" value="2"/>
</dbReference>
<dbReference type="PRINTS" id="PR00460">
    <property type="entry name" value="BPEROXIDASE"/>
</dbReference>
<dbReference type="PRINTS" id="PR00458">
    <property type="entry name" value="PEROXIDASE"/>
</dbReference>
<dbReference type="SUPFAM" id="SSF48113">
    <property type="entry name" value="Heme-dependent peroxidases"/>
    <property type="match status" value="2"/>
</dbReference>
<dbReference type="PROSITE" id="PS00435">
    <property type="entry name" value="PEROXIDASE_1"/>
    <property type="match status" value="1"/>
</dbReference>
<dbReference type="PROSITE" id="PS00436">
    <property type="entry name" value="PEROXIDASE_2"/>
    <property type="match status" value="1"/>
</dbReference>
<dbReference type="PROSITE" id="PS50873">
    <property type="entry name" value="PEROXIDASE_4"/>
    <property type="match status" value="1"/>
</dbReference>
<reference key="1">
    <citation type="journal article" date="1997" name="J. Bacteriol.">
        <title>katGI and katGII encode two different catalases-peroxidases in Mycobacterium fortuitum.</title>
        <authorList>
            <person name="Menendez M.C."/>
            <person name="Ainsa J.A."/>
            <person name="Martin C."/>
            <person name="Garcia M.J."/>
        </authorList>
    </citation>
    <scope>NUCLEOTIDE SEQUENCE [GENOMIC DNA]</scope>
    <source>
        <strain>ATCC 6841 / DSM 46621 / CIP 104534 / JCM 6387 / KCTC 9510 / NBRC 13159 / NCTC 10394</strain>
    </source>
</reference>
<sequence length="752" mass="83101">MPPNTPDASDARPPQADTETHSHSESENPVIESPKPKAHAPLTNQDWWPDQVDVSRLHKQPIEGNPLGAGFNYAEEFQKLDVEALRADMLELMTSSQDWWPRDYGTYAGLFIRMSWHAAGTYRIFDGRGGAGQGAQRFAPINSWPDNVSLDKARRLLWPIKQKYGNKISWADLIIFAGNVALESAGFKTFGFAFGRQDIWEPEEILWGQEDTWLGTDKRYGGTNDSTNRELANPYGATTMGLIYVNPEGPEGKPDPLAAAHDIRETFGRMAMNDEETAALIVGGHTLGKTHGPGPGDLVGPEPEAAPIEQQGLGWKCAFGSGKGSDTITSGLEVVWTTTPTKWSNSYLEILYGYEWELTKSPGDAWQFEAKDAEAIIPDPFGGPPRKPTMLVTDISMRVDPIYGPITRRWLEHPEELNEAFAKAWYKLLHRDMGPISRYLGPWIPEPQLWQDPVPDVDHPLVDEQDIAALKEKLLDSGLSVQQLVKTAWSAAASFRGTDKRGGANGGRLRLQPQRNWEVNEPSELDKALPVLERIAQDFNASASDGKKISLADLIVLGGSAAIEKAARDGGYEVKVHFVAGRTDASQENTDVDSFAVLEPRADGFRNFVRPGDKAPLEQLLVDKAYFLNLTAPEMTVLVGGLRALNTNHGGSKHGVFTANPGALSNDFFVNLLDMSTEWKPSETAENVYEGRDRRTGQTRWTATANDLVFGSNSVLRAVAEVYAQEDNKAKMIEDFVAAWVKVMNNDRFDLD</sequence>
<protein>
    <recommendedName>
        <fullName evidence="1">Catalase-peroxidase 1</fullName>
        <shortName evidence="1">CP 1</shortName>
        <ecNumber evidence="1">1.11.1.21</ecNumber>
    </recommendedName>
    <alternativeName>
        <fullName evidence="1">Peroxidase/catalase 1</fullName>
    </alternativeName>
</protein>
<proteinExistence type="inferred from homology"/>
<evidence type="ECO:0000255" key="1">
    <source>
        <dbReference type="HAMAP-Rule" id="MF_01961"/>
    </source>
</evidence>
<evidence type="ECO:0000256" key="2">
    <source>
        <dbReference type="SAM" id="MobiDB-lite"/>
    </source>
</evidence>
<keyword id="KW-0349">Heme</keyword>
<keyword id="KW-0376">Hydrogen peroxide</keyword>
<keyword id="KW-0408">Iron</keyword>
<keyword id="KW-0479">Metal-binding</keyword>
<keyword id="KW-0560">Oxidoreductase</keyword>
<keyword id="KW-0575">Peroxidase</keyword>
<feature type="chain" id="PRO_0000055572" description="Catalase-peroxidase 1">
    <location>
        <begin position="1"/>
        <end position="752"/>
    </location>
</feature>
<feature type="region of interest" description="Disordered" evidence="2">
    <location>
        <begin position="1"/>
        <end position="45"/>
    </location>
</feature>
<feature type="active site" description="Proton acceptor" evidence="1">
    <location>
        <position position="117"/>
    </location>
</feature>
<feature type="binding site" description="axial binding residue" evidence="1">
    <location>
        <position position="285"/>
    </location>
    <ligand>
        <name>heme b</name>
        <dbReference type="ChEBI" id="CHEBI:60344"/>
    </ligand>
    <ligandPart>
        <name>Fe</name>
        <dbReference type="ChEBI" id="CHEBI:18248"/>
    </ligandPart>
</feature>
<feature type="site" description="Transition state stabilizer" evidence="1">
    <location>
        <position position="113"/>
    </location>
</feature>
<feature type="cross-link" description="Tryptophyl-tyrosyl-methioninium (Trp-Tyr) (with M-270)" evidence="1">
    <location>
        <begin position="116"/>
        <end position="244"/>
    </location>
</feature>
<feature type="cross-link" description="Tryptophyl-tyrosyl-methioninium (Tyr-Met) (with W-116)" evidence="1">
    <location>
        <begin position="244"/>
        <end position="270"/>
    </location>
</feature>
<comment type="function">
    <text evidence="1">Bifunctional enzyme with both catalase and broad-spectrum peroxidase activity. May play a role in the intracellular survival of mycobacteria (By similarity).</text>
</comment>
<comment type="catalytic activity">
    <reaction evidence="1">
        <text>H2O2 + AH2 = A + 2 H2O</text>
        <dbReference type="Rhea" id="RHEA:30275"/>
        <dbReference type="ChEBI" id="CHEBI:13193"/>
        <dbReference type="ChEBI" id="CHEBI:15377"/>
        <dbReference type="ChEBI" id="CHEBI:16240"/>
        <dbReference type="ChEBI" id="CHEBI:17499"/>
        <dbReference type="EC" id="1.11.1.21"/>
    </reaction>
</comment>
<comment type="catalytic activity">
    <reaction evidence="1">
        <text>2 H2O2 = O2 + 2 H2O</text>
        <dbReference type="Rhea" id="RHEA:20309"/>
        <dbReference type="ChEBI" id="CHEBI:15377"/>
        <dbReference type="ChEBI" id="CHEBI:15379"/>
        <dbReference type="ChEBI" id="CHEBI:16240"/>
        <dbReference type="EC" id="1.11.1.21"/>
    </reaction>
</comment>
<comment type="cofactor">
    <cofactor>
        <name>heme b</name>
        <dbReference type="ChEBI" id="CHEBI:60344"/>
    </cofactor>
    <text>Binds 1 heme b (iron(II)-protoporphyrin IX) group per dimer.</text>
</comment>
<comment type="subunit">
    <text evidence="1">Homodimer or homotetramer.</text>
</comment>
<comment type="PTM">
    <text evidence="1">Formation of the three residue Trp-Tyr-Met cross-link is important for the catalase, but not the peroxidase activity of the enzyme.</text>
</comment>
<comment type="similarity">
    <text evidence="1">Belongs to the peroxidase family. Peroxidase/catalase subfamily.</text>
</comment>
<organism>
    <name type="scientific">Mycolicibacterium fortuitum</name>
    <name type="common">Mycobacterium fortuitum</name>
    <dbReference type="NCBI Taxonomy" id="1766"/>
    <lineage>
        <taxon>Bacteria</taxon>
        <taxon>Bacillati</taxon>
        <taxon>Actinomycetota</taxon>
        <taxon>Actinomycetes</taxon>
        <taxon>Mycobacteriales</taxon>
        <taxon>Mycobacteriaceae</taxon>
        <taxon>Mycolicibacterium</taxon>
    </lineage>
</organism>
<accession>O08404</accession>